<feature type="chain" id="PRO_1000131142" description="UPF0246 protein YaaA">
    <location>
        <begin position="1"/>
        <end position="257"/>
    </location>
</feature>
<proteinExistence type="inferred from homology"/>
<protein>
    <recommendedName>
        <fullName evidence="1">UPF0246 protein YaaA</fullName>
    </recommendedName>
</protein>
<reference key="1">
    <citation type="journal article" date="2009" name="BMC Genomics">
        <title>Pseudogene accumulation in the evolutionary histories of Salmonella enterica serovars Paratyphi A and Typhi.</title>
        <authorList>
            <person name="Holt K.E."/>
            <person name="Thomson N.R."/>
            <person name="Wain J."/>
            <person name="Langridge G.C."/>
            <person name="Hasan R."/>
            <person name="Bhutta Z.A."/>
            <person name="Quail M.A."/>
            <person name="Norbertczak H."/>
            <person name="Walker D."/>
            <person name="Simmonds M."/>
            <person name="White B."/>
            <person name="Bason N."/>
            <person name="Mungall K."/>
            <person name="Dougan G."/>
            <person name="Parkhill J."/>
        </authorList>
    </citation>
    <scope>NUCLEOTIDE SEQUENCE [LARGE SCALE GENOMIC DNA]</scope>
    <source>
        <strain>AKU_12601</strain>
    </source>
</reference>
<comment type="similarity">
    <text evidence="1">Belongs to the UPF0246 family.</text>
</comment>
<gene>
    <name evidence="1" type="primary">yaaA</name>
    <name type="ordered locus">SSPA0005</name>
</gene>
<accession>B5BLH1</accession>
<dbReference type="EMBL" id="FM200053">
    <property type="protein sequence ID" value="CAR58112.1"/>
    <property type="molecule type" value="Genomic_DNA"/>
</dbReference>
<dbReference type="RefSeq" id="WP_000906175.1">
    <property type="nucleotide sequence ID" value="NC_011147.1"/>
</dbReference>
<dbReference type="SMR" id="B5BLH1"/>
<dbReference type="KEGG" id="sek:SSPA0005"/>
<dbReference type="HOGENOM" id="CLU_061989_0_0_6"/>
<dbReference type="Proteomes" id="UP000001869">
    <property type="component" value="Chromosome"/>
</dbReference>
<dbReference type="GO" id="GO:0005829">
    <property type="term" value="C:cytosol"/>
    <property type="evidence" value="ECO:0007669"/>
    <property type="project" value="TreeGrafter"/>
</dbReference>
<dbReference type="GO" id="GO:0033194">
    <property type="term" value="P:response to hydroperoxide"/>
    <property type="evidence" value="ECO:0007669"/>
    <property type="project" value="TreeGrafter"/>
</dbReference>
<dbReference type="HAMAP" id="MF_00652">
    <property type="entry name" value="UPF0246"/>
    <property type="match status" value="1"/>
</dbReference>
<dbReference type="InterPro" id="IPR005583">
    <property type="entry name" value="YaaA"/>
</dbReference>
<dbReference type="NCBIfam" id="NF002541">
    <property type="entry name" value="PRK02101.1-1"/>
    <property type="match status" value="1"/>
</dbReference>
<dbReference type="NCBIfam" id="NF002542">
    <property type="entry name" value="PRK02101.1-3"/>
    <property type="match status" value="1"/>
</dbReference>
<dbReference type="PANTHER" id="PTHR30283:SF4">
    <property type="entry name" value="PEROXIDE STRESS RESISTANCE PROTEIN YAAA"/>
    <property type="match status" value="1"/>
</dbReference>
<dbReference type="PANTHER" id="PTHR30283">
    <property type="entry name" value="PEROXIDE STRESS RESPONSE PROTEIN YAAA"/>
    <property type="match status" value="1"/>
</dbReference>
<dbReference type="Pfam" id="PF03883">
    <property type="entry name" value="H2O2_YaaD"/>
    <property type="match status" value="1"/>
</dbReference>
<evidence type="ECO:0000255" key="1">
    <source>
        <dbReference type="HAMAP-Rule" id="MF_00652"/>
    </source>
</evidence>
<sequence>MLILISPAKTLDYQSPLATTRYTQPELLDHSQQLIQQARQLSAPQISRLMGISDKLADLNATRFHDWQPHFTPDNARQAILAFKGDVYTGLQAETFNDADFDFAQQHLRMLSGLYGVLRPLDLMQPYRLEMGIRLENPRGKDLYQFWGDIITDKLNEALEAQGDRVVVNLASEEYFKSVKPKKLNAELIKPVFLDEKNGKFKVVSFYAKKARGLMSRFIIENRLTKPEQLTAFDREGYFFDEETSTQDELVFKRYEQ</sequence>
<name>YAAA_SALPK</name>
<organism>
    <name type="scientific">Salmonella paratyphi A (strain AKU_12601)</name>
    <dbReference type="NCBI Taxonomy" id="554290"/>
    <lineage>
        <taxon>Bacteria</taxon>
        <taxon>Pseudomonadati</taxon>
        <taxon>Pseudomonadota</taxon>
        <taxon>Gammaproteobacteria</taxon>
        <taxon>Enterobacterales</taxon>
        <taxon>Enterobacteriaceae</taxon>
        <taxon>Salmonella</taxon>
    </lineage>
</organism>